<name>SYT_BACFR</name>
<evidence type="ECO:0000255" key="1">
    <source>
        <dbReference type="HAMAP-Rule" id="MF_00184"/>
    </source>
</evidence>
<evidence type="ECO:0000255" key="2">
    <source>
        <dbReference type="PROSITE-ProRule" id="PRU01228"/>
    </source>
</evidence>
<accession>Q64VP2</accession>
<proteinExistence type="inferred from homology"/>
<organism>
    <name type="scientific">Bacteroides fragilis (strain YCH46)</name>
    <dbReference type="NCBI Taxonomy" id="295405"/>
    <lineage>
        <taxon>Bacteria</taxon>
        <taxon>Pseudomonadati</taxon>
        <taxon>Bacteroidota</taxon>
        <taxon>Bacteroidia</taxon>
        <taxon>Bacteroidales</taxon>
        <taxon>Bacteroidaceae</taxon>
        <taxon>Bacteroides</taxon>
    </lineage>
</organism>
<keyword id="KW-0030">Aminoacyl-tRNA synthetase</keyword>
<keyword id="KW-0067">ATP-binding</keyword>
<keyword id="KW-0963">Cytoplasm</keyword>
<keyword id="KW-0436">Ligase</keyword>
<keyword id="KW-0479">Metal-binding</keyword>
<keyword id="KW-0547">Nucleotide-binding</keyword>
<keyword id="KW-0648">Protein biosynthesis</keyword>
<keyword id="KW-0694">RNA-binding</keyword>
<keyword id="KW-0820">tRNA-binding</keyword>
<keyword id="KW-0862">Zinc</keyword>
<sequence>MIKITFPDGSVREYNEGVNGLQIAESISSRLAQDVLACGVNGEIYDLGRPINEDASVVLYKWEDEQGKHAFWHTSAHLLAEALQELYPGIQFGIGPAIENGFYYDVDPGEAVIKEADLPAIEAKMAELVAKKEAVVRRDIAKGDALKMFGDRGETYKCELISELEDGHITTYTQGDFTDLCRGPHLMTTAPIKAIKLTSVAGAYWRGHEDRKMLTRIYGITFPKKKMLDEYLALMEEAKKRDHRKIGKEMQLFMFSDTVGKGLPMWLPKGTALRLRLQDFLRRIQTRYDYQEVITPPIGNKLLYVTSGHYAKYGKDAFQPIHTPEEGEEYFLKPMNCPHHCEIYKNFPRSYKDLPLRIAEFGTVCRYEQSGELHGLTRVRSFTQDDAHIFCRPDQVKGEFLRVMDIISIVFRSMDFDNFEAQISLRDKVNREKYIGSDENWEKAEQAIIEACEEKGLKAKIEYGEAAFYGPKLDFMVKDAIGRRWQLGTIQVDYNLPERFELEYMGSDNQKHRPVMIHRAPFGSMERFVAVLIEHTAGKFPLWLTPEQVVILPISEKFNEYAEKVKTYLKMKEIRAIVDDRNEKIGRKIRDNEMKRIPYMLIVGEKEAENGEVSVRRQGEGDKGTMKFEEFGEILNEEVQNMINKW</sequence>
<gene>
    <name evidence="1" type="primary">thrS</name>
    <name type="ordered locus">BF1687</name>
</gene>
<protein>
    <recommendedName>
        <fullName evidence="1">Threonine--tRNA ligase</fullName>
        <ecNumber evidence="1">6.1.1.3</ecNumber>
    </recommendedName>
    <alternativeName>
        <fullName evidence="1">Threonyl-tRNA synthetase</fullName>
        <shortName evidence="1">ThrRS</shortName>
    </alternativeName>
</protein>
<comment type="function">
    <text evidence="1">Catalyzes the attachment of threonine to tRNA(Thr) in a two-step reaction: L-threonine is first activated by ATP to form Thr-AMP and then transferred to the acceptor end of tRNA(Thr). Also edits incorrectly charged L-seryl-tRNA(Thr).</text>
</comment>
<comment type="catalytic activity">
    <reaction evidence="1">
        <text>tRNA(Thr) + L-threonine + ATP = L-threonyl-tRNA(Thr) + AMP + diphosphate + H(+)</text>
        <dbReference type="Rhea" id="RHEA:24624"/>
        <dbReference type="Rhea" id="RHEA-COMP:9670"/>
        <dbReference type="Rhea" id="RHEA-COMP:9704"/>
        <dbReference type="ChEBI" id="CHEBI:15378"/>
        <dbReference type="ChEBI" id="CHEBI:30616"/>
        <dbReference type="ChEBI" id="CHEBI:33019"/>
        <dbReference type="ChEBI" id="CHEBI:57926"/>
        <dbReference type="ChEBI" id="CHEBI:78442"/>
        <dbReference type="ChEBI" id="CHEBI:78534"/>
        <dbReference type="ChEBI" id="CHEBI:456215"/>
        <dbReference type="EC" id="6.1.1.3"/>
    </reaction>
</comment>
<comment type="cofactor">
    <cofactor evidence="1">
        <name>Zn(2+)</name>
        <dbReference type="ChEBI" id="CHEBI:29105"/>
    </cofactor>
    <text evidence="1">Binds 1 zinc ion per subunit.</text>
</comment>
<comment type="subunit">
    <text evidence="1">Homodimer.</text>
</comment>
<comment type="subcellular location">
    <subcellularLocation>
        <location evidence="1">Cytoplasm</location>
    </subcellularLocation>
</comment>
<comment type="similarity">
    <text evidence="1">Belongs to the class-II aminoacyl-tRNA synthetase family.</text>
</comment>
<feature type="chain" id="PRO_0000100936" description="Threonine--tRNA ligase">
    <location>
        <begin position="1"/>
        <end position="646"/>
    </location>
</feature>
<feature type="domain" description="TGS" evidence="2">
    <location>
        <begin position="1"/>
        <end position="61"/>
    </location>
</feature>
<feature type="region of interest" description="Catalytic" evidence="1">
    <location>
        <begin position="242"/>
        <end position="541"/>
    </location>
</feature>
<feature type="binding site" evidence="1">
    <location>
        <position position="337"/>
    </location>
    <ligand>
        <name>Zn(2+)</name>
        <dbReference type="ChEBI" id="CHEBI:29105"/>
    </ligand>
</feature>
<feature type="binding site" evidence="1">
    <location>
        <position position="388"/>
    </location>
    <ligand>
        <name>Zn(2+)</name>
        <dbReference type="ChEBI" id="CHEBI:29105"/>
    </ligand>
</feature>
<feature type="binding site" evidence="1">
    <location>
        <position position="518"/>
    </location>
    <ligand>
        <name>Zn(2+)</name>
        <dbReference type="ChEBI" id="CHEBI:29105"/>
    </ligand>
</feature>
<reference key="1">
    <citation type="journal article" date="2004" name="Proc. Natl. Acad. Sci. U.S.A.">
        <title>Genomic analysis of Bacteroides fragilis reveals extensive DNA inversions regulating cell surface adaptation.</title>
        <authorList>
            <person name="Kuwahara T."/>
            <person name="Yamashita A."/>
            <person name="Hirakawa H."/>
            <person name="Nakayama H."/>
            <person name="Toh H."/>
            <person name="Okada N."/>
            <person name="Kuhara S."/>
            <person name="Hattori M."/>
            <person name="Hayashi T."/>
            <person name="Ohnishi Y."/>
        </authorList>
    </citation>
    <scope>NUCLEOTIDE SEQUENCE [LARGE SCALE GENOMIC DNA]</scope>
    <source>
        <strain>YCH46</strain>
    </source>
</reference>
<dbReference type="EC" id="6.1.1.3" evidence="1"/>
<dbReference type="EMBL" id="AP006841">
    <property type="protein sequence ID" value="BAD48434.1"/>
    <property type="molecule type" value="Genomic_DNA"/>
</dbReference>
<dbReference type="RefSeq" id="WP_005786570.1">
    <property type="nucleotide sequence ID" value="NZ_UYXF01000008.1"/>
</dbReference>
<dbReference type="RefSeq" id="YP_098968.1">
    <property type="nucleotide sequence ID" value="NC_006347.1"/>
</dbReference>
<dbReference type="SMR" id="Q64VP2"/>
<dbReference type="STRING" id="295405.BF1687"/>
<dbReference type="GeneID" id="60369845"/>
<dbReference type="KEGG" id="bfr:BF1687"/>
<dbReference type="PATRIC" id="fig|295405.11.peg.1639"/>
<dbReference type="HOGENOM" id="CLU_008554_0_1_10"/>
<dbReference type="OrthoDB" id="9802304at2"/>
<dbReference type="Proteomes" id="UP000002197">
    <property type="component" value="Chromosome"/>
</dbReference>
<dbReference type="GO" id="GO:0005737">
    <property type="term" value="C:cytoplasm"/>
    <property type="evidence" value="ECO:0007669"/>
    <property type="project" value="UniProtKB-SubCell"/>
</dbReference>
<dbReference type="GO" id="GO:0005524">
    <property type="term" value="F:ATP binding"/>
    <property type="evidence" value="ECO:0007669"/>
    <property type="project" value="UniProtKB-UniRule"/>
</dbReference>
<dbReference type="GO" id="GO:0046872">
    <property type="term" value="F:metal ion binding"/>
    <property type="evidence" value="ECO:0007669"/>
    <property type="project" value="UniProtKB-KW"/>
</dbReference>
<dbReference type="GO" id="GO:0004829">
    <property type="term" value="F:threonine-tRNA ligase activity"/>
    <property type="evidence" value="ECO:0007669"/>
    <property type="project" value="UniProtKB-UniRule"/>
</dbReference>
<dbReference type="GO" id="GO:0000049">
    <property type="term" value="F:tRNA binding"/>
    <property type="evidence" value="ECO:0007669"/>
    <property type="project" value="UniProtKB-KW"/>
</dbReference>
<dbReference type="GO" id="GO:0006435">
    <property type="term" value="P:threonyl-tRNA aminoacylation"/>
    <property type="evidence" value="ECO:0007669"/>
    <property type="project" value="UniProtKB-UniRule"/>
</dbReference>
<dbReference type="CDD" id="cd01667">
    <property type="entry name" value="TGS_ThrRS"/>
    <property type="match status" value="1"/>
</dbReference>
<dbReference type="CDD" id="cd00860">
    <property type="entry name" value="ThrRS_anticodon"/>
    <property type="match status" value="1"/>
</dbReference>
<dbReference type="CDD" id="cd00771">
    <property type="entry name" value="ThrRS_core"/>
    <property type="match status" value="1"/>
</dbReference>
<dbReference type="FunFam" id="3.10.20.30:FF:000005">
    <property type="entry name" value="Threonine--tRNA ligase"/>
    <property type="match status" value="1"/>
</dbReference>
<dbReference type="FunFam" id="3.30.54.20:FF:000002">
    <property type="entry name" value="Threonine--tRNA ligase"/>
    <property type="match status" value="1"/>
</dbReference>
<dbReference type="FunFam" id="3.30.930.10:FF:000002">
    <property type="entry name" value="Threonine--tRNA ligase"/>
    <property type="match status" value="1"/>
</dbReference>
<dbReference type="FunFam" id="3.40.50.800:FF:000001">
    <property type="entry name" value="Threonine--tRNA ligase"/>
    <property type="match status" value="1"/>
</dbReference>
<dbReference type="FunFam" id="3.30.980.10:FF:000005">
    <property type="entry name" value="Threonyl-tRNA synthetase, mitochondrial"/>
    <property type="match status" value="1"/>
</dbReference>
<dbReference type="Gene3D" id="3.10.20.30">
    <property type="match status" value="1"/>
</dbReference>
<dbReference type="Gene3D" id="3.30.54.20">
    <property type="match status" value="1"/>
</dbReference>
<dbReference type="Gene3D" id="3.40.50.800">
    <property type="entry name" value="Anticodon-binding domain"/>
    <property type="match status" value="1"/>
</dbReference>
<dbReference type="Gene3D" id="3.30.930.10">
    <property type="entry name" value="Bira Bifunctional Protein, Domain 2"/>
    <property type="match status" value="1"/>
</dbReference>
<dbReference type="Gene3D" id="3.30.980.10">
    <property type="entry name" value="Threonyl-trna Synthetase, Chain A, domain 2"/>
    <property type="match status" value="1"/>
</dbReference>
<dbReference type="HAMAP" id="MF_00184">
    <property type="entry name" value="Thr_tRNA_synth"/>
    <property type="match status" value="1"/>
</dbReference>
<dbReference type="InterPro" id="IPR002314">
    <property type="entry name" value="aa-tRNA-synt_IIb"/>
</dbReference>
<dbReference type="InterPro" id="IPR006195">
    <property type="entry name" value="aa-tRNA-synth_II"/>
</dbReference>
<dbReference type="InterPro" id="IPR045864">
    <property type="entry name" value="aa-tRNA-synth_II/BPL/LPL"/>
</dbReference>
<dbReference type="InterPro" id="IPR004154">
    <property type="entry name" value="Anticodon-bd"/>
</dbReference>
<dbReference type="InterPro" id="IPR036621">
    <property type="entry name" value="Anticodon-bd_dom_sf"/>
</dbReference>
<dbReference type="InterPro" id="IPR012675">
    <property type="entry name" value="Beta-grasp_dom_sf"/>
</dbReference>
<dbReference type="InterPro" id="IPR004095">
    <property type="entry name" value="TGS"/>
</dbReference>
<dbReference type="InterPro" id="IPR012676">
    <property type="entry name" value="TGS-like"/>
</dbReference>
<dbReference type="InterPro" id="IPR002320">
    <property type="entry name" value="Thr-tRNA-ligase_IIa"/>
</dbReference>
<dbReference type="InterPro" id="IPR018163">
    <property type="entry name" value="Thr/Ala-tRNA-synth_IIc_edit"/>
</dbReference>
<dbReference type="InterPro" id="IPR047246">
    <property type="entry name" value="ThrRS_anticodon"/>
</dbReference>
<dbReference type="InterPro" id="IPR033728">
    <property type="entry name" value="ThrRS_core"/>
</dbReference>
<dbReference type="InterPro" id="IPR012947">
    <property type="entry name" value="tRNA_SAD"/>
</dbReference>
<dbReference type="NCBIfam" id="TIGR00418">
    <property type="entry name" value="thrS"/>
    <property type="match status" value="1"/>
</dbReference>
<dbReference type="PANTHER" id="PTHR11451:SF44">
    <property type="entry name" value="THREONINE--TRNA LIGASE, CHLOROPLASTIC_MITOCHONDRIAL 2"/>
    <property type="match status" value="1"/>
</dbReference>
<dbReference type="PANTHER" id="PTHR11451">
    <property type="entry name" value="THREONINE-TRNA LIGASE"/>
    <property type="match status" value="1"/>
</dbReference>
<dbReference type="Pfam" id="PF03129">
    <property type="entry name" value="HGTP_anticodon"/>
    <property type="match status" value="1"/>
</dbReference>
<dbReference type="Pfam" id="PF02824">
    <property type="entry name" value="TGS"/>
    <property type="match status" value="1"/>
</dbReference>
<dbReference type="Pfam" id="PF00587">
    <property type="entry name" value="tRNA-synt_2b"/>
    <property type="match status" value="1"/>
</dbReference>
<dbReference type="Pfam" id="PF07973">
    <property type="entry name" value="tRNA_SAD"/>
    <property type="match status" value="1"/>
</dbReference>
<dbReference type="PRINTS" id="PR01047">
    <property type="entry name" value="TRNASYNTHTHR"/>
</dbReference>
<dbReference type="SMART" id="SM00863">
    <property type="entry name" value="tRNA_SAD"/>
    <property type="match status" value="1"/>
</dbReference>
<dbReference type="SUPFAM" id="SSF52954">
    <property type="entry name" value="Class II aaRS ABD-related"/>
    <property type="match status" value="1"/>
</dbReference>
<dbReference type="SUPFAM" id="SSF55681">
    <property type="entry name" value="Class II aaRS and biotin synthetases"/>
    <property type="match status" value="1"/>
</dbReference>
<dbReference type="SUPFAM" id="SSF81271">
    <property type="entry name" value="TGS-like"/>
    <property type="match status" value="1"/>
</dbReference>
<dbReference type="SUPFAM" id="SSF55186">
    <property type="entry name" value="ThrRS/AlaRS common domain"/>
    <property type="match status" value="1"/>
</dbReference>
<dbReference type="PROSITE" id="PS50862">
    <property type="entry name" value="AA_TRNA_LIGASE_II"/>
    <property type="match status" value="1"/>
</dbReference>
<dbReference type="PROSITE" id="PS51880">
    <property type="entry name" value="TGS"/>
    <property type="match status" value="1"/>
</dbReference>